<comment type="function">
    <text evidence="2">One of the essential components for the initiation of protein synthesis. Protects formylmethionyl-tRNA from spontaneous hydrolysis and promotes its binding to the 30S ribosomal subunits. Also involved in the hydrolysis of GTP during the formation of the 70S ribosomal complex.</text>
</comment>
<comment type="subcellular location">
    <subcellularLocation>
        <location evidence="2">Cytoplasm</location>
    </subcellularLocation>
</comment>
<comment type="similarity">
    <text evidence="2">Belongs to the TRAFAC class translation factor GTPase superfamily. Classic translation factor GTPase family. IF-2 subfamily.</text>
</comment>
<proteinExistence type="inferred from homology"/>
<organism>
    <name type="scientific">Burkholderia mallei (strain NCTC 10229)</name>
    <dbReference type="NCBI Taxonomy" id="412022"/>
    <lineage>
        <taxon>Bacteria</taxon>
        <taxon>Pseudomonadati</taxon>
        <taxon>Pseudomonadota</taxon>
        <taxon>Betaproteobacteria</taxon>
        <taxon>Burkholderiales</taxon>
        <taxon>Burkholderiaceae</taxon>
        <taxon>Burkholderia</taxon>
        <taxon>pseudomallei group</taxon>
    </lineage>
</organism>
<name>IF2_BURM9</name>
<evidence type="ECO:0000250" key="1"/>
<evidence type="ECO:0000255" key="2">
    <source>
        <dbReference type="HAMAP-Rule" id="MF_00100"/>
    </source>
</evidence>
<evidence type="ECO:0000256" key="3">
    <source>
        <dbReference type="SAM" id="MobiDB-lite"/>
    </source>
</evidence>
<accession>A2S2L1</accession>
<feature type="chain" id="PRO_1000008212" description="Translation initiation factor IF-2">
    <location>
        <begin position="1"/>
        <end position="975"/>
    </location>
</feature>
<feature type="domain" description="tr-type G">
    <location>
        <begin position="475"/>
        <end position="644"/>
    </location>
</feature>
<feature type="region of interest" description="Disordered" evidence="3">
    <location>
        <begin position="48"/>
        <end position="84"/>
    </location>
</feature>
<feature type="region of interest" description="Disordered" evidence="3">
    <location>
        <begin position="98"/>
        <end position="388"/>
    </location>
</feature>
<feature type="region of interest" description="G1" evidence="1">
    <location>
        <begin position="484"/>
        <end position="491"/>
    </location>
</feature>
<feature type="region of interest" description="G2" evidence="1">
    <location>
        <begin position="509"/>
        <end position="513"/>
    </location>
</feature>
<feature type="region of interest" description="G3" evidence="1">
    <location>
        <begin position="530"/>
        <end position="533"/>
    </location>
</feature>
<feature type="region of interest" description="G4" evidence="1">
    <location>
        <begin position="584"/>
        <end position="587"/>
    </location>
</feature>
<feature type="region of interest" description="G5" evidence="1">
    <location>
        <begin position="620"/>
        <end position="622"/>
    </location>
</feature>
<feature type="compositionally biased region" description="Basic and acidic residues" evidence="3">
    <location>
        <begin position="48"/>
        <end position="63"/>
    </location>
</feature>
<feature type="compositionally biased region" description="Low complexity" evidence="3">
    <location>
        <begin position="104"/>
        <end position="115"/>
    </location>
</feature>
<feature type="compositionally biased region" description="Basic and acidic residues" evidence="3">
    <location>
        <begin position="120"/>
        <end position="177"/>
    </location>
</feature>
<feature type="compositionally biased region" description="Low complexity" evidence="3">
    <location>
        <begin position="178"/>
        <end position="211"/>
    </location>
</feature>
<feature type="compositionally biased region" description="Basic and acidic residues" evidence="3">
    <location>
        <begin position="212"/>
        <end position="263"/>
    </location>
</feature>
<feature type="compositionally biased region" description="Low complexity" evidence="3">
    <location>
        <begin position="302"/>
        <end position="330"/>
    </location>
</feature>
<feature type="compositionally biased region" description="Gly residues" evidence="3">
    <location>
        <begin position="359"/>
        <end position="372"/>
    </location>
</feature>
<feature type="binding site" evidence="2">
    <location>
        <begin position="484"/>
        <end position="491"/>
    </location>
    <ligand>
        <name>GTP</name>
        <dbReference type="ChEBI" id="CHEBI:37565"/>
    </ligand>
</feature>
<feature type="binding site" evidence="2">
    <location>
        <begin position="530"/>
        <end position="534"/>
    </location>
    <ligand>
        <name>GTP</name>
        <dbReference type="ChEBI" id="CHEBI:37565"/>
    </ligand>
</feature>
<feature type="binding site" evidence="2">
    <location>
        <begin position="584"/>
        <end position="587"/>
    </location>
    <ligand>
        <name>GTP</name>
        <dbReference type="ChEBI" id="CHEBI:37565"/>
    </ligand>
</feature>
<gene>
    <name evidence="2" type="primary">infB</name>
    <name type="ordered locus">BMA10229_A0175</name>
</gene>
<protein>
    <recommendedName>
        <fullName evidence="2">Translation initiation factor IF-2</fullName>
    </recommendedName>
</protein>
<dbReference type="EMBL" id="CP000546">
    <property type="protein sequence ID" value="ABN03072.1"/>
    <property type="molecule type" value="Genomic_DNA"/>
</dbReference>
<dbReference type="RefSeq" id="WP_004197388.1">
    <property type="nucleotide sequence ID" value="NC_008836.1"/>
</dbReference>
<dbReference type="SMR" id="A2S2L1"/>
<dbReference type="GeneID" id="92978809"/>
<dbReference type="KEGG" id="bml:BMA10229_A0175"/>
<dbReference type="HOGENOM" id="CLU_006301_6_0_4"/>
<dbReference type="Proteomes" id="UP000002283">
    <property type="component" value="Chromosome I"/>
</dbReference>
<dbReference type="GO" id="GO:0005829">
    <property type="term" value="C:cytosol"/>
    <property type="evidence" value="ECO:0007669"/>
    <property type="project" value="TreeGrafter"/>
</dbReference>
<dbReference type="GO" id="GO:0005525">
    <property type="term" value="F:GTP binding"/>
    <property type="evidence" value="ECO:0007669"/>
    <property type="project" value="UniProtKB-KW"/>
</dbReference>
<dbReference type="GO" id="GO:0003924">
    <property type="term" value="F:GTPase activity"/>
    <property type="evidence" value="ECO:0007669"/>
    <property type="project" value="UniProtKB-UniRule"/>
</dbReference>
<dbReference type="GO" id="GO:0097216">
    <property type="term" value="F:guanosine tetraphosphate binding"/>
    <property type="evidence" value="ECO:0007669"/>
    <property type="project" value="UniProtKB-ARBA"/>
</dbReference>
<dbReference type="GO" id="GO:0003743">
    <property type="term" value="F:translation initiation factor activity"/>
    <property type="evidence" value="ECO:0007669"/>
    <property type="project" value="UniProtKB-UniRule"/>
</dbReference>
<dbReference type="CDD" id="cd01887">
    <property type="entry name" value="IF2_eIF5B"/>
    <property type="match status" value="1"/>
</dbReference>
<dbReference type="CDD" id="cd03702">
    <property type="entry name" value="IF2_mtIF2_II"/>
    <property type="match status" value="1"/>
</dbReference>
<dbReference type="CDD" id="cd03692">
    <property type="entry name" value="mtIF2_IVc"/>
    <property type="match status" value="1"/>
</dbReference>
<dbReference type="FunFam" id="2.40.30.10:FF:000007">
    <property type="entry name" value="Translation initiation factor IF-2"/>
    <property type="match status" value="1"/>
</dbReference>
<dbReference type="FunFam" id="2.40.30.10:FF:000008">
    <property type="entry name" value="Translation initiation factor IF-2"/>
    <property type="match status" value="1"/>
</dbReference>
<dbReference type="FunFam" id="3.40.50.10050:FF:000001">
    <property type="entry name" value="Translation initiation factor IF-2"/>
    <property type="match status" value="1"/>
</dbReference>
<dbReference type="FunFam" id="3.40.50.300:FF:000019">
    <property type="entry name" value="Translation initiation factor IF-2"/>
    <property type="match status" value="1"/>
</dbReference>
<dbReference type="Gene3D" id="3.40.50.300">
    <property type="entry name" value="P-loop containing nucleotide triphosphate hydrolases"/>
    <property type="match status" value="1"/>
</dbReference>
<dbReference type="Gene3D" id="3.30.56.50">
    <property type="entry name" value="Putative DNA-binding domain, N-terminal subdomain of bacterial translation initiation factor IF2"/>
    <property type="match status" value="1"/>
</dbReference>
<dbReference type="Gene3D" id="2.40.30.10">
    <property type="entry name" value="Translation factors"/>
    <property type="match status" value="2"/>
</dbReference>
<dbReference type="Gene3D" id="3.40.50.10050">
    <property type="entry name" value="Translation initiation factor IF- 2, domain 3"/>
    <property type="match status" value="1"/>
</dbReference>
<dbReference type="HAMAP" id="MF_00100_B">
    <property type="entry name" value="IF_2_B"/>
    <property type="match status" value="1"/>
</dbReference>
<dbReference type="InterPro" id="IPR009061">
    <property type="entry name" value="DNA-bd_dom_put_sf"/>
</dbReference>
<dbReference type="InterPro" id="IPR053905">
    <property type="entry name" value="EF-G-like_DII"/>
</dbReference>
<dbReference type="InterPro" id="IPR004161">
    <property type="entry name" value="EFTu-like_2"/>
</dbReference>
<dbReference type="InterPro" id="IPR013575">
    <property type="entry name" value="IF2_assoc_dom_bac"/>
</dbReference>
<dbReference type="InterPro" id="IPR044145">
    <property type="entry name" value="IF2_II"/>
</dbReference>
<dbReference type="InterPro" id="IPR006847">
    <property type="entry name" value="IF2_N"/>
</dbReference>
<dbReference type="InterPro" id="IPR027417">
    <property type="entry name" value="P-loop_NTPase"/>
</dbReference>
<dbReference type="InterPro" id="IPR005225">
    <property type="entry name" value="Small_GTP-bd"/>
</dbReference>
<dbReference type="InterPro" id="IPR000795">
    <property type="entry name" value="T_Tr_GTP-bd_dom"/>
</dbReference>
<dbReference type="InterPro" id="IPR000178">
    <property type="entry name" value="TF_IF2_bacterial-like"/>
</dbReference>
<dbReference type="InterPro" id="IPR015760">
    <property type="entry name" value="TIF_IF2"/>
</dbReference>
<dbReference type="InterPro" id="IPR023115">
    <property type="entry name" value="TIF_IF2_dom3"/>
</dbReference>
<dbReference type="InterPro" id="IPR036925">
    <property type="entry name" value="TIF_IF2_dom3_sf"/>
</dbReference>
<dbReference type="InterPro" id="IPR009000">
    <property type="entry name" value="Transl_B-barrel_sf"/>
</dbReference>
<dbReference type="NCBIfam" id="TIGR00487">
    <property type="entry name" value="IF-2"/>
    <property type="match status" value="1"/>
</dbReference>
<dbReference type="NCBIfam" id="TIGR00231">
    <property type="entry name" value="small_GTP"/>
    <property type="match status" value="1"/>
</dbReference>
<dbReference type="PANTHER" id="PTHR43381:SF5">
    <property type="entry name" value="TR-TYPE G DOMAIN-CONTAINING PROTEIN"/>
    <property type="match status" value="1"/>
</dbReference>
<dbReference type="PANTHER" id="PTHR43381">
    <property type="entry name" value="TRANSLATION INITIATION FACTOR IF-2-RELATED"/>
    <property type="match status" value="1"/>
</dbReference>
<dbReference type="Pfam" id="PF22042">
    <property type="entry name" value="EF-G_D2"/>
    <property type="match status" value="1"/>
</dbReference>
<dbReference type="Pfam" id="PF00009">
    <property type="entry name" value="GTP_EFTU"/>
    <property type="match status" value="1"/>
</dbReference>
<dbReference type="Pfam" id="PF03144">
    <property type="entry name" value="GTP_EFTU_D2"/>
    <property type="match status" value="1"/>
</dbReference>
<dbReference type="Pfam" id="PF11987">
    <property type="entry name" value="IF-2"/>
    <property type="match status" value="1"/>
</dbReference>
<dbReference type="Pfam" id="PF08364">
    <property type="entry name" value="IF2_assoc"/>
    <property type="match status" value="1"/>
</dbReference>
<dbReference type="Pfam" id="PF04760">
    <property type="entry name" value="IF2_N"/>
    <property type="match status" value="2"/>
</dbReference>
<dbReference type="SUPFAM" id="SSF52156">
    <property type="entry name" value="Initiation factor IF2/eIF5b, domain 3"/>
    <property type="match status" value="1"/>
</dbReference>
<dbReference type="SUPFAM" id="SSF52540">
    <property type="entry name" value="P-loop containing nucleoside triphosphate hydrolases"/>
    <property type="match status" value="1"/>
</dbReference>
<dbReference type="SUPFAM" id="SSF46955">
    <property type="entry name" value="Putative DNA-binding domain"/>
    <property type="match status" value="1"/>
</dbReference>
<dbReference type="SUPFAM" id="SSF50447">
    <property type="entry name" value="Translation proteins"/>
    <property type="match status" value="2"/>
</dbReference>
<dbReference type="PROSITE" id="PS51722">
    <property type="entry name" value="G_TR_2"/>
    <property type="match status" value="1"/>
</dbReference>
<dbReference type="PROSITE" id="PS01176">
    <property type="entry name" value="IF2"/>
    <property type="match status" value="1"/>
</dbReference>
<reference key="1">
    <citation type="journal article" date="2010" name="Genome Biol. Evol.">
        <title>Continuing evolution of Burkholderia mallei through genome reduction and large-scale rearrangements.</title>
        <authorList>
            <person name="Losada L."/>
            <person name="Ronning C.M."/>
            <person name="DeShazer D."/>
            <person name="Woods D."/>
            <person name="Fedorova N."/>
            <person name="Kim H.S."/>
            <person name="Shabalina S.A."/>
            <person name="Pearson T.R."/>
            <person name="Brinkac L."/>
            <person name="Tan P."/>
            <person name="Nandi T."/>
            <person name="Crabtree J."/>
            <person name="Badger J."/>
            <person name="Beckstrom-Sternberg S."/>
            <person name="Saqib M."/>
            <person name="Schutzer S.E."/>
            <person name="Keim P."/>
            <person name="Nierman W.C."/>
        </authorList>
    </citation>
    <scope>NUCLEOTIDE SEQUENCE [LARGE SCALE GENOMIC DNA]</scope>
    <source>
        <strain>NCTC 10229</strain>
    </source>
</reference>
<sequence length="975" mass="104751">MASNNVAQFAAELKMPAGVLLEQLQAAGVQKASEDDALSETDKARLLDHLRKSHGATDGDKRKITLTRRHTSEIKQADATGKARTIQVEVRKKRTFVKRDDVSETGADQAQAQTDEQAEAELKRREEEARREAELLEKQAQELRERQERLEREEAERRAREEAAEAERRRAEEEAAAKRAAAAQAEAAQQAAAAREQAQRAQSEPAEQSAQDEARAAAERAAQREAAKKAEDAAREAADKARAEQEEIRKRREAAEAEARAIREMMNTPRRAQVKAVEPPKPAEPPAAKAAEAKGTLHKPAKPAGEAAAARPAAKKPASGAPAPAAAPAGDRTKKPGTGKSGWQDDAAKRRGIKTRGDSSGGVDRGWRGGPKGRGKHQDSASSFQAPTEPIVREVHVPETISVADLAHKMSIKASEVIKVMMKMGQMVTINQVLDQETAMIVVEELGHRALAAKLDDPEALLVEGEIGSDAEQLPRPPVVTVMGHVDHGKTSLLDYIRRAKVAAGEAGGITQHIGAYHVETPRGVVTFLDTPGHEAFTAMRARGAKATDIVILVVAADDGVMPQTKEAISHAKAGGVPIVVAINKIDKPEANPDRVKQELVAEGVVPEEYGGDSPFVPVSAKTGAGIDDLLENVLLQAEVLELKAPVESPAKGIVIEAKLDKGKGPVATVLVQSGTLSRGDVVLAGTAYGRVRAMLDENGKPTKEAGPSIPVEIQGLSEVPGAGDEVIVLPDERKAREIALFRQGKFRDVKLAKQQAAKLESMLEQMGEGEVQNLPLIIKADVQGSQEALVQSLLKLSTDEVRVQIVHSAVGGISESDVNLATASKAVIIGFNTRADAQARKLAEANGIDIRYYNIIYDAVDEVKAAMSGMLAPEKREVVTGMVEVRQVFKVPKVGTVAGCMVTDGVVKRSSSVRVLRNNVVIFTGELDSLKRFKDDVKEVKQGFECGMSLKNFNDIVEGDQFEVFEVTEVARTL</sequence>
<keyword id="KW-0963">Cytoplasm</keyword>
<keyword id="KW-0342">GTP-binding</keyword>
<keyword id="KW-0396">Initiation factor</keyword>
<keyword id="KW-0547">Nucleotide-binding</keyword>
<keyword id="KW-0648">Protein biosynthesis</keyword>